<name>ATPF_SHEPA</name>
<proteinExistence type="inferred from homology"/>
<evidence type="ECO:0000255" key="1">
    <source>
        <dbReference type="HAMAP-Rule" id="MF_01398"/>
    </source>
</evidence>
<accession>A8HAG7</accession>
<comment type="function">
    <text evidence="1">F(1)F(0) ATP synthase produces ATP from ADP in the presence of a proton or sodium gradient. F-type ATPases consist of two structural domains, F(1) containing the extramembraneous catalytic core and F(0) containing the membrane proton channel, linked together by a central stalk and a peripheral stalk. During catalysis, ATP synthesis in the catalytic domain of F(1) is coupled via a rotary mechanism of the central stalk subunits to proton translocation.</text>
</comment>
<comment type="function">
    <text evidence="1">Component of the F(0) channel, it forms part of the peripheral stalk, linking F(1) to F(0).</text>
</comment>
<comment type="subunit">
    <text evidence="1">F-type ATPases have 2 components, F(1) - the catalytic core - and F(0) - the membrane proton channel. F(1) has five subunits: alpha(3), beta(3), gamma(1), delta(1), epsilon(1). F(0) has three main subunits: a(1), b(2) and c(10-14). The alpha and beta chains form an alternating ring which encloses part of the gamma chain. F(1) is attached to F(0) by a central stalk formed by the gamma and epsilon chains, while a peripheral stalk is formed by the delta and b chains.</text>
</comment>
<comment type="subcellular location">
    <subcellularLocation>
        <location evidence="1">Cell inner membrane</location>
        <topology evidence="1">Single-pass membrane protein</topology>
    </subcellularLocation>
</comment>
<comment type="similarity">
    <text evidence="1">Belongs to the ATPase B chain family.</text>
</comment>
<gene>
    <name evidence="1" type="primary">atpF</name>
    <name type="ordered locus">Spea_4244</name>
</gene>
<sequence length="156" mass="17302">MSINATLLGQAISFLLFVWFCMKFVWPPLMNAIEERQKKIADGLADAGRAAKDLELAQVKATEQLKDAKATANEIIEQANKRKAQIVDEAKVEADTERAKIIAQGHAEIENERNRVKEDLRKQVAILAIAGAEKILERSIDEAAHSDIVNKLVAEL</sequence>
<feature type="chain" id="PRO_0000368762" description="ATP synthase subunit b">
    <location>
        <begin position="1"/>
        <end position="156"/>
    </location>
</feature>
<feature type="transmembrane region" description="Helical" evidence="1">
    <location>
        <begin position="7"/>
        <end position="29"/>
    </location>
</feature>
<protein>
    <recommendedName>
        <fullName evidence="1">ATP synthase subunit b</fullName>
    </recommendedName>
    <alternativeName>
        <fullName evidence="1">ATP synthase F(0) sector subunit b</fullName>
    </alternativeName>
    <alternativeName>
        <fullName evidence="1">ATPase subunit I</fullName>
    </alternativeName>
    <alternativeName>
        <fullName evidence="1">F-type ATPase subunit b</fullName>
        <shortName evidence="1">F-ATPase subunit b</shortName>
    </alternativeName>
</protein>
<reference key="1">
    <citation type="submission" date="2007-10" db="EMBL/GenBank/DDBJ databases">
        <title>Complete sequence of Shewanella pealeana ATCC 700345.</title>
        <authorList>
            <consortium name="US DOE Joint Genome Institute"/>
            <person name="Copeland A."/>
            <person name="Lucas S."/>
            <person name="Lapidus A."/>
            <person name="Barry K."/>
            <person name="Glavina del Rio T."/>
            <person name="Dalin E."/>
            <person name="Tice H."/>
            <person name="Pitluck S."/>
            <person name="Chertkov O."/>
            <person name="Brettin T."/>
            <person name="Bruce D."/>
            <person name="Detter J.C."/>
            <person name="Han C."/>
            <person name="Schmutz J."/>
            <person name="Larimer F."/>
            <person name="Land M."/>
            <person name="Hauser L."/>
            <person name="Kyrpides N."/>
            <person name="Kim E."/>
            <person name="Zhao J.-S.Z."/>
            <person name="Manno D."/>
            <person name="Hawari J."/>
            <person name="Richardson P."/>
        </authorList>
    </citation>
    <scope>NUCLEOTIDE SEQUENCE [LARGE SCALE GENOMIC DNA]</scope>
    <source>
        <strain>ATCC 700345 / ANG-SQ1</strain>
    </source>
</reference>
<keyword id="KW-0066">ATP synthesis</keyword>
<keyword id="KW-0997">Cell inner membrane</keyword>
<keyword id="KW-1003">Cell membrane</keyword>
<keyword id="KW-0138">CF(0)</keyword>
<keyword id="KW-0375">Hydrogen ion transport</keyword>
<keyword id="KW-0406">Ion transport</keyword>
<keyword id="KW-0472">Membrane</keyword>
<keyword id="KW-1185">Reference proteome</keyword>
<keyword id="KW-0812">Transmembrane</keyword>
<keyword id="KW-1133">Transmembrane helix</keyword>
<keyword id="KW-0813">Transport</keyword>
<dbReference type="EMBL" id="CP000851">
    <property type="protein sequence ID" value="ABV89554.1"/>
    <property type="molecule type" value="Genomic_DNA"/>
</dbReference>
<dbReference type="RefSeq" id="WP_012157431.1">
    <property type="nucleotide sequence ID" value="NC_009901.1"/>
</dbReference>
<dbReference type="SMR" id="A8HAG7"/>
<dbReference type="STRING" id="398579.Spea_4244"/>
<dbReference type="KEGG" id="spl:Spea_4244"/>
<dbReference type="eggNOG" id="COG0711">
    <property type="taxonomic scope" value="Bacteria"/>
</dbReference>
<dbReference type="HOGENOM" id="CLU_079215_4_5_6"/>
<dbReference type="OrthoDB" id="9788020at2"/>
<dbReference type="Proteomes" id="UP000002608">
    <property type="component" value="Chromosome"/>
</dbReference>
<dbReference type="GO" id="GO:0005886">
    <property type="term" value="C:plasma membrane"/>
    <property type="evidence" value="ECO:0007669"/>
    <property type="project" value="UniProtKB-SubCell"/>
</dbReference>
<dbReference type="GO" id="GO:0045259">
    <property type="term" value="C:proton-transporting ATP synthase complex"/>
    <property type="evidence" value="ECO:0007669"/>
    <property type="project" value="UniProtKB-KW"/>
</dbReference>
<dbReference type="GO" id="GO:0046933">
    <property type="term" value="F:proton-transporting ATP synthase activity, rotational mechanism"/>
    <property type="evidence" value="ECO:0007669"/>
    <property type="project" value="UniProtKB-UniRule"/>
</dbReference>
<dbReference type="GO" id="GO:0046961">
    <property type="term" value="F:proton-transporting ATPase activity, rotational mechanism"/>
    <property type="evidence" value="ECO:0007669"/>
    <property type="project" value="TreeGrafter"/>
</dbReference>
<dbReference type="CDD" id="cd06503">
    <property type="entry name" value="ATP-synt_Fo_b"/>
    <property type="match status" value="1"/>
</dbReference>
<dbReference type="FunFam" id="1.20.5.620:FF:000001">
    <property type="entry name" value="ATP synthase subunit b"/>
    <property type="match status" value="1"/>
</dbReference>
<dbReference type="Gene3D" id="1.20.5.620">
    <property type="entry name" value="F1F0 ATP synthase subunit B, membrane domain"/>
    <property type="match status" value="1"/>
</dbReference>
<dbReference type="HAMAP" id="MF_01398">
    <property type="entry name" value="ATP_synth_b_bprime"/>
    <property type="match status" value="1"/>
</dbReference>
<dbReference type="InterPro" id="IPR028987">
    <property type="entry name" value="ATP_synth_B-like_membr_sf"/>
</dbReference>
<dbReference type="InterPro" id="IPR002146">
    <property type="entry name" value="ATP_synth_b/b'su_bac/chlpt"/>
</dbReference>
<dbReference type="InterPro" id="IPR005864">
    <property type="entry name" value="ATP_synth_F0_bsu_bac"/>
</dbReference>
<dbReference type="InterPro" id="IPR050059">
    <property type="entry name" value="ATP_synthase_B_chain"/>
</dbReference>
<dbReference type="NCBIfam" id="TIGR01144">
    <property type="entry name" value="ATP_synt_b"/>
    <property type="match status" value="1"/>
</dbReference>
<dbReference type="NCBIfam" id="NF004411">
    <property type="entry name" value="PRK05759.1-2"/>
    <property type="match status" value="1"/>
</dbReference>
<dbReference type="NCBIfam" id="NF004413">
    <property type="entry name" value="PRK05759.1-4"/>
    <property type="match status" value="1"/>
</dbReference>
<dbReference type="PANTHER" id="PTHR33445:SF1">
    <property type="entry name" value="ATP SYNTHASE SUBUNIT B"/>
    <property type="match status" value="1"/>
</dbReference>
<dbReference type="PANTHER" id="PTHR33445">
    <property type="entry name" value="ATP SYNTHASE SUBUNIT B', CHLOROPLASTIC"/>
    <property type="match status" value="1"/>
</dbReference>
<dbReference type="Pfam" id="PF00430">
    <property type="entry name" value="ATP-synt_B"/>
    <property type="match status" value="1"/>
</dbReference>
<dbReference type="SUPFAM" id="SSF81573">
    <property type="entry name" value="F1F0 ATP synthase subunit B, membrane domain"/>
    <property type="match status" value="1"/>
</dbReference>
<organism>
    <name type="scientific">Shewanella pealeana (strain ATCC 700345 / ANG-SQ1)</name>
    <dbReference type="NCBI Taxonomy" id="398579"/>
    <lineage>
        <taxon>Bacteria</taxon>
        <taxon>Pseudomonadati</taxon>
        <taxon>Pseudomonadota</taxon>
        <taxon>Gammaproteobacteria</taxon>
        <taxon>Alteromonadales</taxon>
        <taxon>Shewanellaceae</taxon>
        <taxon>Shewanella</taxon>
    </lineage>
</organism>